<protein>
    <recommendedName>
        <fullName>Probable peptide/nitrate transporter At3g43790</fullName>
    </recommendedName>
    <alternativeName>
        <fullName>Protein ZINC INDUCED FACILITATOR-LIKE 2</fullName>
    </alternativeName>
</protein>
<comment type="subcellular location">
    <subcellularLocation>
        <location evidence="1">Membrane</location>
        <topology evidence="1">Multi-pass membrane protein</topology>
    </subcellularLocation>
</comment>
<comment type="alternative products">
    <event type="alternative splicing"/>
    <isoform>
        <id>Q3EAQ5-1</id>
        <name>1</name>
        <sequence type="displayed"/>
    </isoform>
    <isoform>
        <id>Q3EAQ5-2</id>
        <name>2</name>
        <sequence type="described" ref="VSP_039950"/>
    </isoform>
</comment>
<comment type="disruption phenotype">
    <text evidence="3">No visible phenotype.</text>
</comment>
<comment type="similarity">
    <text evidence="5">Belongs to the major facilitator superfamily.</text>
</comment>
<comment type="sequence caution" evidence="5">
    <conflict type="erroneous gene model prediction">
        <sequence resource="EMBL-CDS" id="CAB83151"/>
    </conflict>
</comment>
<proteinExistence type="evidence at transcript level"/>
<name>PTR36_ARATH</name>
<gene>
    <name type="primary">ZIFL2</name>
    <name type="ordered locus">At3g43790</name>
    <name type="ORF">T28A8.80</name>
</gene>
<reference key="1">
    <citation type="journal article" date="2000" name="Nature">
        <title>Sequence and analysis of chromosome 3 of the plant Arabidopsis thaliana.</title>
        <authorList>
            <person name="Salanoubat M."/>
            <person name="Lemcke K."/>
            <person name="Rieger M."/>
            <person name="Ansorge W."/>
            <person name="Unseld M."/>
            <person name="Fartmann B."/>
            <person name="Valle G."/>
            <person name="Bloecker H."/>
            <person name="Perez-Alonso M."/>
            <person name="Obermaier B."/>
            <person name="Delseny M."/>
            <person name="Boutry M."/>
            <person name="Grivell L.A."/>
            <person name="Mache R."/>
            <person name="Puigdomenech P."/>
            <person name="De Simone V."/>
            <person name="Choisne N."/>
            <person name="Artiguenave F."/>
            <person name="Robert C."/>
            <person name="Brottier P."/>
            <person name="Wincker P."/>
            <person name="Cattolico L."/>
            <person name="Weissenbach J."/>
            <person name="Saurin W."/>
            <person name="Quetier F."/>
            <person name="Schaefer M."/>
            <person name="Mueller-Auer S."/>
            <person name="Gabel C."/>
            <person name="Fuchs M."/>
            <person name="Benes V."/>
            <person name="Wurmbach E."/>
            <person name="Drzonek H."/>
            <person name="Erfle H."/>
            <person name="Jordan N."/>
            <person name="Bangert S."/>
            <person name="Wiedelmann R."/>
            <person name="Kranz H."/>
            <person name="Voss H."/>
            <person name="Holland R."/>
            <person name="Brandt P."/>
            <person name="Nyakatura G."/>
            <person name="Vezzi A."/>
            <person name="D'Angelo M."/>
            <person name="Pallavicini A."/>
            <person name="Toppo S."/>
            <person name="Simionati B."/>
            <person name="Conrad A."/>
            <person name="Hornischer K."/>
            <person name="Kauer G."/>
            <person name="Loehnert T.-H."/>
            <person name="Nordsiek G."/>
            <person name="Reichelt J."/>
            <person name="Scharfe M."/>
            <person name="Schoen O."/>
            <person name="Bargues M."/>
            <person name="Terol J."/>
            <person name="Climent J."/>
            <person name="Navarro P."/>
            <person name="Collado C."/>
            <person name="Perez-Perez A."/>
            <person name="Ottenwaelder B."/>
            <person name="Duchemin D."/>
            <person name="Cooke R."/>
            <person name="Laudie M."/>
            <person name="Berger-Llauro C."/>
            <person name="Purnelle B."/>
            <person name="Masuy D."/>
            <person name="de Haan M."/>
            <person name="Maarse A.C."/>
            <person name="Alcaraz J.-P."/>
            <person name="Cottet A."/>
            <person name="Casacuberta E."/>
            <person name="Monfort A."/>
            <person name="Argiriou A."/>
            <person name="Flores M."/>
            <person name="Liguori R."/>
            <person name="Vitale D."/>
            <person name="Mannhaupt G."/>
            <person name="Haase D."/>
            <person name="Schoof H."/>
            <person name="Rudd S."/>
            <person name="Zaccaria P."/>
            <person name="Mewes H.-W."/>
            <person name="Mayer K.F.X."/>
            <person name="Kaul S."/>
            <person name="Town C.D."/>
            <person name="Koo H.L."/>
            <person name="Tallon L.J."/>
            <person name="Jenkins J."/>
            <person name="Rooney T."/>
            <person name="Rizzo M."/>
            <person name="Walts A."/>
            <person name="Utterback T."/>
            <person name="Fujii C.Y."/>
            <person name="Shea T.P."/>
            <person name="Creasy T.H."/>
            <person name="Haas B."/>
            <person name="Maiti R."/>
            <person name="Wu D."/>
            <person name="Peterson J."/>
            <person name="Van Aken S."/>
            <person name="Pai G."/>
            <person name="Militscher J."/>
            <person name="Sellers P."/>
            <person name="Gill J.E."/>
            <person name="Feldblyum T.V."/>
            <person name="Preuss D."/>
            <person name="Lin X."/>
            <person name="Nierman W.C."/>
            <person name="Salzberg S.L."/>
            <person name="White O."/>
            <person name="Venter J.C."/>
            <person name="Fraser C.M."/>
            <person name="Kaneko T."/>
            <person name="Nakamura Y."/>
            <person name="Sato S."/>
            <person name="Kato T."/>
            <person name="Asamizu E."/>
            <person name="Sasamoto S."/>
            <person name="Kimura T."/>
            <person name="Idesawa K."/>
            <person name="Kawashima K."/>
            <person name="Kishida Y."/>
            <person name="Kiyokawa C."/>
            <person name="Kohara M."/>
            <person name="Matsumoto M."/>
            <person name="Matsuno A."/>
            <person name="Muraki A."/>
            <person name="Nakayama S."/>
            <person name="Nakazaki N."/>
            <person name="Shinpo S."/>
            <person name="Takeuchi C."/>
            <person name="Wada T."/>
            <person name="Watanabe A."/>
            <person name="Yamada M."/>
            <person name="Yasuda M."/>
            <person name="Tabata S."/>
        </authorList>
    </citation>
    <scope>NUCLEOTIDE SEQUENCE [LARGE SCALE GENOMIC DNA]</scope>
    <source>
        <strain>cv. Columbia</strain>
    </source>
</reference>
<reference key="2">
    <citation type="journal article" date="2017" name="Plant J.">
        <title>Araport11: a complete reannotation of the Arabidopsis thaliana reference genome.</title>
        <authorList>
            <person name="Cheng C.Y."/>
            <person name="Krishnakumar V."/>
            <person name="Chan A.P."/>
            <person name="Thibaud-Nissen F."/>
            <person name="Schobel S."/>
            <person name="Town C.D."/>
        </authorList>
    </citation>
    <scope>GENOME REANNOTATION</scope>
    <source>
        <strain>cv. Columbia</strain>
    </source>
</reference>
<reference key="3">
    <citation type="submission" date="2007-03" db="EMBL/GenBank/DDBJ databases">
        <title>Arabidopsis ORF clones.</title>
        <authorList>
            <person name="Bautista V.R."/>
            <person name="Kim C.J."/>
            <person name="Chen H."/>
            <person name="Wu S.Y."/>
            <person name="De Los Reyes C."/>
            <person name="Ecker J.R."/>
        </authorList>
    </citation>
    <scope>NUCLEOTIDE SEQUENCE [LARGE SCALE MRNA] (ISOFORM 2)</scope>
    <source>
        <strain>cv. Columbia</strain>
    </source>
</reference>
<reference key="4">
    <citation type="journal article" date="2007" name="Plant Physiol.">
        <title>A novel major facilitator superfamily protein at the tonoplast influences zinc tolerance and accumulation in Arabidopsis.</title>
        <authorList>
            <person name="Haydon M.J."/>
            <person name="Cobbett C.S."/>
        </authorList>
    </citation>
    <scope>DISRUPTION PHENOTYPE</scope>
</reference>
<reference key="5">
    <citation type="journal article" date="2010" name="Plant Cell">
        <title>The Arabidopsis nitrate transporter NRT1.8 functions in nitrate removal from the xylem sap and mediates cadmium tolerance.</title>
        <authorList>
            <person name="Li J.Y."/>
            <person name="Fu Y.L."/>
            <person name="Pike S.M."/>
            <person name="Bao J."/>
            <person name="Tian W."/>
            <person name="Zhang Y."/>
            <person name="Chen C.Z."/>
            <person name="Zhang Y."/>
            <person name="Li H.M."/>
            <person name="Huang J."/>
            <person name="Li L.G."/>
            <person name="Schroeder J.I."/>
            <person name="Gassmann W."/>
            <person name="Gong J.M."/>
        </authorList>
    </citation>
    <scope>GENE FAMILY</scope>
</reference>
<sequence length="484" mass="53275">MADDESRTILLEKNEDCPGCIIDRTKQQQRGVPYLHLSFIWLVSLCTALPISSLFPYIYFMIRDFHIAKQEEDIGFYAGFVGSSFMIGRALTSIFWGKLADRYGRKPIILIGTFSVIIFNTLFGLSTSFWLAISVRFLLGCFNCLLGVIRAYASEVVSEEYNALSLSVVSTSRGIGLILGPAIGGYLAQPAEKYPNIFSQSSVFGRFPYFLPSLVISVYATAVLIACWWLPETLHTRCRIAQGRLNPTELNDDESRGGGLDEQKIINKPSLLRNRPLMAIIIVYCVFSLQEIAYNEIFSLWAVSDRSYGGLSFSSQDVGEVLAISGLGLLVFQLLVYPPLEKSVGLLAVIRLSAVLLIPLLSCYPYIALLSGVTLHLVINCASIIKNALSISLVTGLFIMLNKAVPQNQRGAANGISMTAMSVFKSFGPAGGGVLFSWAQKRQDATFLPGQIFAPCDEMVFLVLNLVQLVGLILTFIPYISQIQ</sequence>
<organism>
    <name type="scientific">Arabidopsis thaliana</name>
    <name type="common">Mouse-ear cress</name>
    <dbReference type="NCBI Taxonomy" id="3702"/>
    <lineage>
        <taxon>Eukaryota</taxon>
        <taxon>Viridiplantae</taxon>
        <taxon>Streptophyta</taxon>
        <taxon>Embryophyta</taxon>
        <taxon>Tracheophyta</taxon>
        <taxon>Spermatophyta</taxon>
        <taxon>Magnoliopsida</taxon>
        <taxon>eudicotyledons</taxon>
        <taxon>Gunneridae</taxon>
        <taxon>Pentapetalae</taxon>
        <taxon>rosids</taxon>
        <taxon>malvids</taxon>
        <taxon>Brassicales</taxon>
        <taxon>Brassicaceae</taxon>
        <taxon>Camelineae</taxon>
        <taxon>Arabidopsis</taxon>
    </lineage>
</organism>
<evidence type="ECO:0000250" key="1"/>
<evidence type="ECO:0000255" key="2"/>
<evidence type="ECO:0000269" key="3">
    <source>
    </source>
</evidence>
<evidence type="ECO:0000303" key="4">
    <source ref="3"/>
</evidence>
<evidence type="ECO:0000305" key="5"/>
<accession>Q3EAQ5</accession>
<accession>Q9LZG8</accession>
<feature type="chain" id="PRO_0000399970" description="Probable peptide/nitrate transporter At3g43790">
    <location>
        <begin position="1"/>
        <end position="484"/>
    </location>
</feature>
<feature type="transmembrane region" description="Helical" evidence="2">
    <location>
        <begin position="39"/>
        <end position="59"/>
    </location>
</feature>
<feature type="transmembrane region" description="Helical" evidence="2">
    <location>
        <begin position="76"/>
        <end position="96"/>
    </location>
</feature>
<feature type="transmembrane region" description="Helical" evidence="2">
    <location>
        <begin position="107"/>
        <end position="127"/>
    </location>
</feature>
<feature type="transmembrane region" description="Helical" evidence="2">
    <location>
        <begin position="129"/>
        <end position="149"/>
    </location>
</feature>
<feature type="transmembrane region" description="Helical" evidence="2">
    <location>
        <begin position="168"/>
        <end position="188"/>
    </location>
</feature>
<feature type="transmembrane region" description="Helical" evidence="2">
    <location>
        <begin position="210"/>
        <end position="230"/>
    </location>
</feature>
<feature type="transmembrane region" description="Helical" evidence="2">
    <location>
        <begin position="278"/>
        <end position="298"/>
    </location>
</feature>
<feature type="transmembrane region" description="Helical" evidence="2">
    <location>
        <begin position="318"/>
        <end position="338"/>
    </location>
</feature>
<feature type="transmembrane region" description="Helical" evidence="2">
    <location>
        <begin position="355"/>
        <end position="375"/>
    </location>
</feature>
<feature type="transmembrane region" description="Helical" evidence="2">
    <location>
        <begin position="381"/>
        <end position="401"/>
    </location>
</feature>
<feature type="transmembrane region" description="Helical" evidence="2">
    <location>
        <begin position="416"/>
        <end position="436"/>
    </location>
</feature>
<feature type="transmembrane region" description="Helical" evidence="2">
    <location>
        <begin position="460"/>
        <end position="480"/>
    </location>
</feature>
<feature type="splice variant" id="VSP_039950" description="In isoform 2." evidence="4">
    <location>
        <begin position="451"/>
        <end position="456"/>
    </location>
</feature>
<keyword id="KW-0025">Alternative splicing</keyword>
<keyword id="KW-0472">Membrane</keyword>
<keyword id="KW-1185">Reference proteome</keyword>
<keyword id="KW-0812">Transmembrane</keyword>
<keyword id="KW-1133">Transmembrane helix</keyword>
<keyword id="KW-0813">Transport</keyword>
<dbReference type="EMBL" id="AL162691">
    <property type="protein sequence ID" value="CAB83151.1"/>
    <property type="status" value="ALT_SEQ"/>
    <property type="molecule type" value="Genomic_DNA"/>
</dbReference>
<dbReference type="EMBL" id="CP002686">
    <property type="protein sequence ID" value="AEE77827.1"/>
    <property type="molecule type" value="Genomic_DNA"/>
</dbReference>
<dbReference type="EMBL" id="CP002686">
    <property type="protein sequence ID" value="AEE77828.1"/>
    <property type="molecule type" value="Genomic_DNA"/>
</dbReference>
<dbReference type="EMBL" id="CP002686">
    <property type="protein sequence ID" value="AEE77829.1"/>
    <property type="molecule type" value="Genomic_DNA"/>
</dbReference>
<dbReference type="EMBL" id="CP002686">
    <property type="protein sequence ID" value="ANM64408.1"/>
    <property type="molecule type" value="Genomic_DNA"/>
</dbReference>
<dbReference type="EMBL" id="BT030378">
    <property type="protein sequence ID" value="ABO38791.1"/>
    <property type="molecule type" value="mRNA"/>
</dbReference>
<dbReference type="PIR" id="T47415">
    <property type="entry name" value="T47415"/>
</dbReference>
<dbReference type="RefSeq" id="NP_001326438.1">
    <molecule id="Q3EAQ5-2"/>
    <property type="nucleotide sequence ID" value="NM_001339105.1"/>
</dbReference>
<dbReference type="RefSeq" id="NP_189965.2">
    <molecule id="Q3EAQ5-2"/>
    <property type="nucleotide sequence ID" value="NM_114247.4"/>
</dbReference>
<dbReference type="RefSeq" id="NP_974382.1">
    <molecule id="Q3EAQ5-1"/>
    <property type="nucleotide sequence ID" value="NM_202653.1"/>
</dbReference>
<dbReference type="RefSeq" id="NP_974383.1">
    <molecule id="Q3EAQ5-1"/>
    <property type="nucleotide sequence ID" value="NM_202654.1"/>
</dbReference>
<dbReference type="SMR" id="Q3EAQ5"/>
<dbReference type="FunCoup" id="Q3EAQ5">
    <property type="interactions" value="971"/>
</dbReference>
<dbReference type="STRING" id="3702.Q3EAQ5"/>
<dbReference type="TCDB" id="2.A.1.2.96">
    <property type="family name" value="the major facilitator superfamily (mfs)"/>
</dbReference>
<dbReference type="PaxDb" id="3702-AT3G43790.3"/>
<dbReference type="ProteomicsDB" id="226422">
    <molecule id="Q3EAQ5-1"/>
</dbReference>
<dbReference type="EnsemblPlants" id="AT3G43790.1">
    <molecule id="Q3EAQ5-2"/>
    <property type="protein sequence ID" value="AT3G43790.1"/>
    <property type="gene ID" value="AT3G43790"/>
</dbReference>
<dbReference type="EnsemblPlants" id="AT3G43790.2">
    <molecule id="Q3EAQ5-1"/>
    <property type="protein sequence ID" value="AT3G43790.2"/>
    <property type="gene ID" value="AT3G43790"/>
</dbReference>
<dbReference type="EnsemblPlants" id="AT3G43790.3">
    <molecule id="Q3EAQ5-1"/>
    <property type="protein sequence ID" value="AT3G43790.3"/>
    <property type="gene ID" value="AT3G43790"/>
</dbReference>
<dbReference type="EnsemblPlants" id="AT3G43790.4">
    <molecule id="Q3EAQ5-2"/>
    <property type="protein sequence ID" value="AT3G43790.4"/>
    <property type="gene ID" value="AT3G43790"/>
</dbReference>
<dbReference type="GeneID" id="823490"/>
<dbReference type="Gramene" id="AT3G43790.1">
    <molecule id="Q3EAQ5-2"/>
    <property type="protein sequence ID" value="AT3G43790.1"/>
    <property type="gene ID" value="AT3G43790"/>
</dbReference>
<dbReference type="Gramene" id="AT3G43790.2">
    <molecule id="Q3EAQ5-1"/>
    <property type="protein sequence ID" value="AT3G43790.2"/>
    <property type="gene ID" value="AT3G43790"/>
</dbReference>
<dbReference type="Gramene" id="AT3G43790.3">
    <molecule id="Q3EAQ5-1"/>
    <property type="protein sequence ID" value="AT3G43790.3"/>
    <property type="gene ID" value="AT3G43790"/>
</dbReference>
<dbReference type="Gramene" id="AT3G43790.4">
    <molecule id="Q3EAQ5-2"/>
    <property type="protein sequence ID" value="AT3G43790.4"/>
    <property type="gene ID" value="AT3G43790"/>
</dbReference>
<dbReference type="KEGG" id="ath:AT3G43790"/>
<dbReference type="Araport" id="AT3G43790"/>
<dbReference type="TAIR" id="AT3G43790">
    <property type="gene designation" value="ZIFL2"/>
</dbReference>
<dbReference type="eggNOG" id="KOG2615">
    <property type="taxonomic scope" value="Eukaryota"/>
</dbReference>
<dbReference type="InParanoid" id="Q3EAQ5"/>
<dbReference type="OMA" id="ISHGFAM"/>
<dbReference type="PhylomeDB" id="Q3EAQ5"/>
<dbReference type="PRO" id="PR:Q3EAQ5"/>
<dbReference type="Proteomes" id="UP000006548">
    <property type="component" value="Chromosome 3"/>
</dbReference>
<dbReference type="ExpressionAtlas" id="Q3EAQ5">
    <property type="expression patterns" value="baseline and differential"/>
</dbReference>
<dbReference type="GO" id="GO:0016020">
    <property type="term" value="C:membrane"/>
    <property type="evidence" value="ECO:0007669"/>
    <property type="project" value="UniProtKB-SubCell"/>
</dbReference>
<dbReference type="GO" id="GO:0022857">
    <property type="term" value="F:transmembrane transporter activity"/>
    <property type="evidence" value="ECO:0007669"/>
    <property type="project" value="InterPro"/>
</dbReference>
<dbReference type="GO" id="GO:0009624">
    <property type="term" value="P:response to nematode"/>
    <property type="evidence" value="ECO:0007007"/>
    <property type="project" value="TAIR"/>
</dbReference>
<dbReference type="CDD" id="cd17330">
    <property type="entry name" value="MFS_SLC46_TetA_like"/>
    <property type="match status" value="1"/>
</dbReference>
<dbReference type="FunFam" id="1.20.1250.20:FF:000301">
    <property type="entry name" value="Protein ZINC INDUCED FACILITATOR-LIKE 1"/>
    <property type="match status" value="1"/>
</dbReference>
<dbReference type="Gene3D" id="1.20.1250.20">
    <property type="entry name" value="MFS general substrate transporter like domains"/>
    <property type="match status" value="1"/>
</dbReference>
<dbReference type="InterPro" id="IPR011701">
    <property type="entry name" value="MFS"/>
</dbReference>
<dbReference type="InterPro" id="IPR020846">
    <property type="entry name" value="MFS_dom"/>
</dbReference>
<dbReference type="InterPro" id="IPR036259">
    <property type="entry name" value="MFS_trans_sf"/>
</dbReference>
<dbReference type="PANTHER" id="PTHR23504">
    <property type="entry name" value="MAJOR FACILITATOR SUPERFAMILY DOMAIN-CONTAINING PROTEIN 10"/>
    <property type="match status" value="1"/>
</dbReference>
<dbReference type="PANTHER" id="PTHR23504:SF105">
    <property type="entry name" value="PROTEIN ZINC INDUCED FACILITATOR 1-LIKE"/>
    <property type="match status" value="1"/>
</dbReference>
<dbReference type="Pfam" id="PF07690">
    <property type="entry name" value="MFS_1"/>
    <property type="match status" value="1"/>
</dbReference>
<dbReference type="SUPFAM" id="SSF103473">
    <property type="entry name" value="MFS general substrate transporter"/>
    <property type="match status" value="1"/>
</dbReference>
<dbReference type="PROSITE" id="PS50850">
    <property type="entry name" value="MFS"/>
    <property type="match status" value="1"/>
</dbReference>